<keyword id="KW-0997">Cell inner membrane</keyword>
<keyword id="KW-1003">Cell membrane</keyword>
<keyword id="KW-0285">Flavoprotein</keyword>
<keyword id="KW-0288">FMN</keyword>
<keyword id="KW-0472">Membrane</keyword>
<keyword id="KW-0520">NAD</keyword>
<keyword id="KW-0560">Oxidoreductase</keyword>
<comment type="function">
    <text evidence="1">Regulatory subunit of a potassium efflux system that confers protection against electrophiles. Required for full activity of KefC. Shows redox enzymatic activity, but this enzymatic activity is not required for activation of KefC.</text>
</comment>
<comment type="catalytic activity">
    <reaction evidence="1">
        <text>a quinone + NADH + H(+) = a quinol + NAD(+)</text>
        <dbReference type="Rhea" id="RHEA:46160"/>
        <dbReference type="ChEBI" id="CHEBI:15378"/>
        <dbReference type="ChEBI" id="CHEBI:24646"/>
        <dbReference type="ChEBI" id="CHEBI:57540"/>
        <dbReference type="ChEBI" id="CHEBI:57945"/>
        <dbReference type="ChEBI" id="CHEBI:132124"/>
        <dbReference type="EC" id="1.6.5.2"/>
    </reaction>
</comment>
<comment type="catalytic activity">
    <reaction evidence="1">
        <text>a quinone + NADPH + H(+) = a quinol + NADP(+)</text>
        <dbReference type="Rhea" id="RHEA:46164"/>
        <dbReference type="ChEBI" id="CHEBI:15378"/>
        <dbReference type="ChEBI" id="CHEBI:24646"/>
        <dbReference type="ChEBI" id="CHEBI:57783"/>
        <dbReference type="ChEBI" id="CHEBI:58349"/>
        <dbReference type="ChEBI" id="CHEBI:132124"/>
        <dbReference type="EC" id="1.6.5.2"/>
    </reaction>
</comment>
<comment type="cofactor">
    <cofactor evidence="1">
        <name>FMN</name>
        <dbReference type="ChEBI" id="CHEBI:58210"/>
    </cofactor>
</comment>
<comment type="subunit">
    <text evidence="1">Homodimer. Interacts with KefC.</text>
</comment>
<comment type="subcellular location">
    <subcellularLocation>
        <location evidence="1">Cell inner membrane</location>
        <topology evidence="1">Peripheral membrane protein</topology>
        <orientation evidence="1">Cytoplasmic side</orientation>
    </subcellularLocation>
</comment>
<comment type="similarity">
    <text evidence="1">Belongs to the NAD(P)H dehydrogenase (quinone) family. KefF subfamily.</text>
</comment>
<protein>
    <recommendedName>
        <fullName evidence="1">Glutathione-regulated potassium-efflux system ancillary protein KefF</fullName>
    </recommendedName>
    <alternativeName>
        <fullName evidence="1">Quinone oxidoreductase KefF</fullName>
        <ecNumber evidence="1">1.6.5.2</ecNumber>
    </alternativeName>
</protein>
<accession>B5Y1Z9</accession>
<proteinExistence type="inferred from homology"/>
<evidence type="ECO:0000255" key="1">
    <source>
        <dbReference type="HAMAP-Rule" id="MF_01414"/>
    </source>
</evidence>
<feature type="chain" id="PRO_1000145562" description="Glutathione-regulated potassium-efflux system ancillary protein KefF">
    <location>
        <begin position="1"/>
        <end position="177"/>
    </location>
</feature>
<feature type="binding site" evidence="1">
    <location>
        <position position="8"/>
    </location>
    <ligand>
        <name>FMN</name>
        <dbReference type="ChEBI" id="CHEBI:58210"/>
    </ligand>
</feature>
<feature type="binding site" evidence="1">
    <location>
        <begin position="14"/>
        <end position="17"/>
    </location>
    <ligand>
        <name>FMN</name>
        <dbReference type="ChEBI" id="CHEBI:58210"/>
    </ligand>
</feature>
<feature type="binding site" evidence="1">
    <location>
        <begin position="65"/>
        <end position="68"/>
    </location>
    <ligand>
        <name>FMN</name>
        <dbReference type="ChEBI" id="CHEBI:58210"/>
    </ligand>
</feature>
<feature type="binding site" evidence="1">
    <location>
        <begin position="105"/>
        <end position="108"/>
    </location>
    <ligand>
        <name>FMN</name>
        <dbReference type="ChEBI" id="CHEBI:58210"/>
    </ligand>
</feature>
<organism>
    <name type="scientific">Klebsiella pneumoniae (strain 342)</name>
    <dbReference type="NCBI Taxonomy" id="507522"/>
    <lineage>
        <taxon>Bacteria</taxon>
        <taxon>Pseudomonadati</taxon>
        <taxon>Pseudomonadota</taxon>
        <taxon>Gammaproteobacteria</taxon>
        <taxon>Enterobacterales</taxon>
        <taxon>Enterobacteriaceae</taxon>
        <taxon>Klebsiella/Raoultella group</taxon>
        <taxon>Klebsiella</taxon>
        <taxon>Klebsiella pneumoniae complex</taxon>
    </lineage>
</organism>
<dbReference type="EC" id="1.6.5.2" evidence="1"/>
<dbReference type="EMBL" id="CP000964">
    <property type="protein sequence ID" value="ACI06906.1"/>
    <property type="molecule type" value="Genomic_DNA"/>
</dbReference>
<dbReference type="SMR" id="B5Y1Z9"/>
<dbReference type="KEGG" id="kpe:KPK_4699"/>
<dbReference type="HOGENOM" id="CLU_058643_0_2_6"/>
<dbReference type="Proteomes" id="UP000001734">
    <property type="component" value="Chromosome"/>
</dbReference>
<dbReference type="GO" id="GO:0005886">
    <property type="term" value="C:plasma membrane"/>
    <property type="evidence" value="ECO:0007669"/>
    <property type="project" value="UniProtKB-SubCell"/>
</dbReference>
<dbReference type="GO" id="GO:0009055">
    <property type="term" value="F:electron transfer activity"/>
    <property type="evidence" value="ECO:0007669"/>
    <property type="project" value="TreeGrafter"/>
</dbReference>
<dbReference type="GO" id="GO:0010181">
    <property type="term" value="F:FMN binding"/>
    <property type="evidence" value="ECO:0007669"/>
    <property type="project" value="UniProtKB-UniRule"/>
</dbReference>
<dbReference type="GO" id="GO:0050136">
    <property type="term" value="F:NADH:ubiquinone reductase (non-electrogenic) activity"/>
    <property type="evidence" value="ECO:0007669"/>
    <property type="project" value="RHEA"/>
</dbReference>
<dbReference type="GO" id="GO:0008753">
    <property type="term" value="F:NADPH dehydrogenase (quinone) activity"/>
    <property type="evidence" value="ECO:0007669"/>
    <property type="project" value="RHEA"/>
</dbReference>
<dbReference type="GO" id="GO:1901381">
    <property type="term" value="P:positive regulation of potassium ion transmembrane transport"/>
    <property type="evidence" value="ECO:0007669"/>
    <property type="project" value="UniProtKB-UniRule"/>
</dbReference>
<dbReference type="GO" id="GO:0006813">
    <property type="term" value="P:potassium ion transport"/>
    <property type="evidence" value="ECO:0007669"/>
    <property type="project" value="InterPro"/>
</dbReference>
<dbReference type="Gene3D" id="3.40.50.360">
    <property type="match status" value="1"/>
</dbReference>
<dbReference type="HAMAP" id="MF_01414">
    <property type="entry name" value="K_H_efflux_KefF"/>
    <property type="match status" value="1"/>
</dbReference>
<dbReference type="InterPro" id="IPR003680">
    <property type="entry name" value="Flavodoxin_fold"/>
</dbReference>
<dbReference type="InterPro" id="IPR029039">
    <property type="entry name" value="Flavoprotein-like_sf"/>
</dbReference>
<dbReference type="InterPro" id="IPR023948">
    <property type="entry name" value="K_H_efflux_KefF"/>
</dbReference>
<dbReference type="InterPro" id="IPR046980">
    <property type="entry name" value="KefG/KefF"/>
</dbReference>
<dbReference type="NCBIfam" id="NF002044">
    <property type="entry name" value="PRK00871.1"/>
    <property type="match status" value="1"/>
</dbReference>
<dbReference type="PANTHER" id="PTHR47307:SF2">
    <property type="entry name" value="GLUTATHIONE-REGULATED POTASSIUM-EFFLUX SYSTEM ANCILLARY PROTEIN KEFF"/>
    <property type="match status" value="1"/>
</dbReference>
<dbReference type="PANTHER" id="PTHR47307">
    <property type="entry name" value="GLUTATHIONE-REGULATED POTASSIUM-EFFLUX SYSTEM ANCILLARY PROTEIN KEFG"/>
    <property type="match status" value="1"/>
</dbReference>
<dbReference type="Pfam" id="PF02525">
    <property type="entry name" value="Flavodoxin_2"/>
    <property type="match status" value="1"/>
</dbReference>
<dbReference type="SUPFAM" id="SSF52218">
    <property type="entry name" value="Flavoproteins"/>
    <property type="match status" value="1"/>
</dbReference>
<gene>
    <name evidence="1" type="primary">kefF</name>
    <name type="ordered locus">KPK_4699</name>
</gene>
<name>KEFF_KLEP3</name>
<sequence>MILIIYAHPYPQHSHANKRMLEQAGTLEGVEIRSLYQLYPDFNIDVAAEQAALARADLVIWQHPMQWYSVPPLLKLWMDKVLAHGWAYGHNGIALRGKPLMWAVTTGGGESHFDIGSFPGFPVLAQPLQATALYCGMKWLPPFAMHCTFICDDETLQAQARHYRQRLIDWQEAHQNG</sequence>
<reference key="1">
    <citation type="journal article" date="2008" name="PLoS Genet.">
        <title>Complete genome sequence of the N2-fixing broad host range endophyte Klebsiella pneumoniae 342 and virulence predictions verified in mice.</title>
        <authorList>
            <person name="Fouts D.E."/>
            <person name="Tyler H.L."/>
            <person name="DeBoy R.T."/>
            <person name="Daugherty S."/>
            <person name="Ren Q."/>
            <person name="Badger J.H."/>
            <person name="Durkin A.S."/>
            <person name="Huot H."/>
            <person name="Shrivastava S."/>
            <person name="Kothari S."/>
            <person name="Dodson R.J."/>
            <person name="Mohamoud Y."/>
            <person name="Khouri H."/>
            <person name="Roesch L.F.W."/>
            <person name="Krogfelt K.A."/>
            <person name="Struve C."/>
            <person name="Triplett E.W."/>
            <person name="Methe B.A."/>
        </authorList>
    </citation>
    <scope>NUCLEOTIDE SEQUENCE [LARGE SCALE GENOMIC DNA]</scope>
    <source>
        <strain>342</strain>
    </source>
</reference>